<sequence>MVRKIFQTNAELKDWLSGQNSAIIFIPTMGGLHPGHQYLIQKAKEKKTNTNQIILVSIFVNPLQFSKGEDFKKYPRNIKRDAELAFSAGADAIWAPEYDEVFPGGADSHFKIEVPKTLHNQLCGAERKGHFDGVATVIIRLIKIIKPKKLILGEKDWQQLIIIRKLFQELSIPVKIESYSTQRDQSGFAYSSRNSYLSDSERVNAQSLPNAIKEAKTEFDKGKVINLTKIASIFKENNLKIEYLKIVDPFSLKETENINRLCLLAIAVKCGSTRLIDHTFLMHRKPIIAIDGPAGAGKSTVTKAFAKKLGFIYLDTGAMYRAVTWLIISNSIDPNDQAEIKNILKDSKLEFKNSSFVEQKIFINNIDVTEKIRSPQVTSMVSEIAKQQFVREVLTRKQQVIGNNGGLVAEGRDIGTAVFPDADLKIFLTASPTERAKRRALDLHKRGYEFSSIEDLEKEIKERDKKDSERKIAPLKKAQDAIELVTDGMNIEDVLKELIDIFRSKIPEEVWPTPNS</sequence>
<name>PANCY_PROMT</name>
<organism>
    <name type="scientific">Prochlorococcus marinus (strain NATL2A)</name>
    <dbReference type="NCBI Taxonomy" id="59920"/>
    <lineage>
        <taxon>Bacteria</taxon>
        <taxon>Bacillati</taxon>
        <taxon>Cyanobacteriota</taxon>
        <taxon>Cyanophyceae</taxon>
        <taxon>Synechococcales</taxon>
        <taxon>Prochlorococcaceae</taxon>
        <taxon>Prochlorococcus</taxon>
    </lineage>
</organism>
<feature type="chain" id="PRO_0000239793" description="Bifunctional pantoate ligase/cytidylate kinase">
    <location>
        <begin position="1"/>
        <end position="516"/>
    </location>
</feature>
<feature type="region of interest" description="Pantoate--beta-alanine ligase" evidence="1">
    <location>
        <begin position="1"/>
        <end position="279"/>
    </location>
</feature>
<feature type="region of interest" description="Cytidylate kinase" evidence="1">
    <location>
        <begin position="280"/>
        <end position="516"/>
    </location>
</feature>
<feature type="active site" description="Proton donor" evidence="1">
    <location>
        <position position="36"/>
    </location>
</feature>
<feature type="binding site" evidence="1">
    <location>
        <begin position="29"/>
        <end position="36"/>
    </location>
    <ligand>
        <name>ATP</name>
        <dbReference type="ChEBI" id="CHEBI:30616"/>
    </ligand>
</feature>
<feature type="binding site" evidence="1">
    <location>
        <position position="64"/>
    </location>
    <ligand>
        <name>(R)-pantoate</name>
        <dbReference type="ChEBI" id="CHEBI:15980"/>
    </ligand>
</feature>
<feature type="binding site" evidence="1">
    <location>
        <position position="64"/>
    </location>
    <ligand>
        <name>beta-alanine</name>
        <dbReference type="ChEBI" id="CHEBI:57966"/>
    </ligand>
</feature>
<feature type="binding site" evidence="1">
    <location>
        <begin position="153"/>
        <end position="156"/>
    </location>
    <ligand>
        <name>ATP</name>
        <dbReference type="ChEBI" id="CHEBI:30616"/>
    </ligand>
</feature>
<feature type="binding site" evidence="1">
    <location>
        <position position="159"/>
    </location>
    <ligand>
        <name>(R)-pantoate</name>
        <dbReference type="ChEBI" id="CHEBI:15980"/>
    </ligand>
</feature>
<feature type="binding site" evidence="1">
    <location>
        <begin position="190"/>
        <end position="193"/>
    </location>
    <ligand>
        <name>ATP</name>
        <dbReference type="ChEBI" id="CHEBI:30616"/>
    </ligand>
</feature>
<gene>
    <name evidence="1" type="primary">panC/cmk</name>
    <name type="ordered locus">PMN2A_1165</name>
</gene>
<accession>Q46IM3</accession>
<reference key="1">
    <citation type="journal article" date="2007" name="PLoS Genet.">
        <title>Patterns and implications of gene gain and loss in the evolution of Prochlorococcus.</title>
        <authorList>
            <person name="Kettler G.C."/>
            <person name="Martiny A.C."/>
            <person name="Huang K."/>
            <person name="Zucker J."/>
            <person name="Coleman M.L."/>
            <person name="Rodrigue S."/>
            <person name="Chen F."/>
            <person name="Lapidus A."/>
            <person name="Ferriera S."/>
            <person name="Johnson J."/>
            <person name="Steglich C."/>
            <person name="Church G.M."/>
            <person name="Richardson P."/>
            <person name="Chisholm S.W."/>
        </authorList>
    </citation>
    <scope>NUCLEOTIDE SEQUENCE [LARGE SCALE GENOMIC DNA]</scope>
    <source>
        <strain>NATL2A</strain>
    </source>
</reference>
<evidence type="ECO:0000255" key="1">
    <source>
        <dbReference type="HAMAP-Rule" id="MF_01349"/>
    </source>
</evidence>
<protein>
    <recommendedName>
        <fullName evidence="1">Bifunctional pantoate ligase/cytidylate kinase</fullName>
    </recommendedName>
    <domain>
        <recommendedName>
            <fullName evidence="1">Pantothenate synthetase</fullName>
            <shortName evidence="1">PS</shortName>
            <ecNumber evidence="1">6.3.2.1</ecNumber>
        </recommendedName>
        <alternativeName>
            <fullName evidence="1">Pantoate--beta-alanine ligase</fullName>
        </alternativeName>
        <alternativeName>
            <fullName evidence="1">Pantoate-activating enzyme</fullName>
        </alternativeName>
    </domain>
    <domain>
        <recommendedName>
            <fullName evidence="1">Cytidylate kinase</fullName>
            <shortName evidence="1">CK</shortName>
            <ecNumber evidence="1">2.7.4.25</ecNumber>
        </recommendedName>
        <alternativeName>
            <fullName evidence="1">Cytidine monophosphate kinase</fullName>
            <shortName evidence="1">CMP kinase</shortName>
        </alternativeName>
    </domain>
</protein>
<keyword id="KW-0067">ATP-binding</keyword>
<keyword id="KW-0963">Cytoplasm</keyword>
<keyword id="KW-0418">Kinase</keyword>
<keyword id="KW-0436">Ligase</keyword>
<keyword id="KW-0511">Multifunctional enzyme</keyword>
<keyword id="KW-0547">Nucleotide-binding</keyword>
<keyword id="KW-0566">Pantothenate biosynthesis</keyword>
<keyword id="KW-1185">Reference proteome</keyword>
<keyword id="KW-0808">Transferase</keyword>
<proteinExistence type="inferred from homology"/>
<dbReference type="EC" id="6.3.2.1" evidence="1"/>
<dbReference type="EC" id="2.7.4.25" evidence="1"/>
<dbReference type="EMBL" id="CP000095">
    <property type="protein sequence ID" value="AAZ58655.1"/>
    <property type="molecule type" value="Genomic_DNA"/>
</dbReference>
<dbReference type="RefSeq" id="WP_011295509.1">
    <property type="nucleotide sequence ID" value="NC_007335.2"/>
</dbReference>
<dbReference type="SMR" id="Q46IM3"/>
<dbReference type="STRING" id="59920.PMN2A_1165"/>
<dbReference type="KEGG" id="pmn:PMN2A_1165"/>
<dbReference type="HOGENOM" id="CLU_037427_0_0_3"/>
<dbReference type="OrthoDB" id="9773087at2"/>
<dbReference type="PhylomeDB" id="Q46IM3"/>
<dbReference type="UniPathway" id="UPA00028">
    <property type="reaction ID" value="UER00005"/>
</dbReference>
<dbReference type="Proteomes" id="UP000002535">
    <property type="component" value="Chromosome"/>
</dbReference>
<dbReference type="GO" id="GO:0005829">
    <property type="term" value="C:cytosol"/>
    <property type="evidence" value="ECO:0007669"/>
    <property type="project" value="TreeGrafter"/>
</dbReference>
<dbReference type="GO" id="GO:0005524">
    <property type="term" value="F:ATP binding"/>
    <property type="evidence" value="ECO:0007669"/>
    <property type="project" value="UniProtKB-UniRule"/>
</dbReference>
<dbReference type="GO" id="GO:0036430">
    <property type="term" value="F:CMP kinase activity"/>
    <property type="evidence" value="ECO:0007669"/>
    <property type="project" value="RHEA"/>
</dbReference>
<dbReference type="GO" id="GO:0036431">
    <property type="term" value="F:dCMP kinase activity"/>
    <property type="evidence" value="ECO:0007669"/>
    <property type="project" value="RHEA"/>
</dbReference>
<dbReference type="GO" id="GO:0004592">
    <property type="term" value="F:pantoate-beta-alanine ligase activity"/>
    <property type="evidence" value="ECO:0007669"/>
    <property type="project" value="UniProtKB-UniRule"/>
</dbReference>
<dbReference type="GO" id="GO:0015949">
    <property type="term" value="P:nucleobase-containing small molecule interconversion"/>
    <property type="evidence" value="ECO:0007669"/>
    <property type="project" value="TreeGrafter"/>
</dbReference>
<dbReference type="GO" id="GO:0015940">
    <property type="term" value="P:pantothenate biosynthetic process"/>
    <property type="evidence" value="ECO:0007669"/>
    <property type="project" value="UniProtKB-UniRule"/>
</dbReference>
<dbReference type="GO" id="GO:0006220">
    <property type="term" value="P:pyrimidine nucleotide metabolic process"/>
    <property type="evidence" value="ECO:0007669"/>
    <property type="project" value="UniProtKB-UniRule"/>
</dbReference>
<dbReference type="CDD" id="cd02020">
    <property type="entry name" value="CMPK"/>
    <property type="match status" value="1"/>
</dbReference>
<dbReference type="Gene3D" id="3.40.50.620">
    <property type="entry name" value="HUPs"/>
    <property type="match status" value="1"/>
</dbReference>
<dbReference type="Gene3D" id="3.40.50.300">
    <property type="entry name" value="P-loop containing nucleotide triphosphate hydrolases"/>
    <property type="match status" value="1"/>
</dbReference>
<dbReference type="Gene3D" id="3.30.1300.10">
    <property type="entry name" value="Pantoate-beta-alanine ligase, C-terminal domain"/>
    <property type="match status" value="1"/>
</dbReference>
<dbReference type="HAMAP" id="MF_00238">
    <property type="entry name" value="Cytidyl_kinase_type1"/>
    <property type="match status" value="1"/>
</dbReference>
<dbReference type="HAMAP" id="MF_00158">
    <property type="entry name" value="PanC"/>
    <property type="match status" value="1"/>
</dbReference>
<dbReference type="HAMAP" id="MF_01349">
    <property type="entry name" value="PanCY"/>
    <property type="match status" value="1"/>
</dbReference>
<dbReference type="InterPro" id="IPR003136">
    <property type="entry name" value="Cytidylate_kin"/>
</dbReference>
<dbReference type="InterPro" id="IPR011994">
    <property type="entry name" value="Cytidylate_kinase_dom"/>
</dbReference>
<dbReference type="InterPro" id="IPR027417">
    <property type="entry name" value="P-loop_NTPase"/>
</dbReference>
<dbReference type="InterPro" id="IPR003721">
    <property type="entry name" value="Pantoate_ligase"/>
</dbReference>
<dbReference type="InterPro" id="IPR024894">
    <property type="entry name" value="Pantoate_ligase/cytidylate_kin"/>
</dbReference>
<dbReference type="InterPro" id="IPR042176">
    <property type="entry name" value="Pantoate_ligase_C"/>
</dbReference>
<dbReference type="InterPro" id="IPR014729">
    <property type="entry name" value="Rossmann-like_a/b/a_fold"/>
</dbReference>
<dbReference type="NCBIfam" id="TIGR00017">
    <property type="entry name" value="cmk"/>
    <property type="match status" value="1"/>
</dbReference>
<dbReference type="NCBIfam" id="TIGR00018">
    <property type="entry name" value="panC"/>
    <property type="match status" value="1"/>
</dbReference>
<dbReference type="NCBIfam" id="NF010004">
    <property type="entry name" value="PRK13477.1"/>
    <property type="match status" value="1"/>
</dbReference>
<dbReference type="PANTHER" id="PTHR21299:SF2">
    <property type="entry name" value="CYTIDYLATE KINASE"/>
    <property type="match status" value="1"/>
</dbReference>
<dbReference type="PANTHER" id="PTHR21299">
    <property type="entry name" value="CYTIDYLATE KINASE/PANTOATE-BETA-ALANINE LIGASE"/>
    <property type="match status" value="1"/>
</dbReference>
<dbReference type="Pfam" id="PF02224">
    <property type="entry name" value="Cytidylate_kin"/>
    <property type="match status" value="1"/>
</dbReference>
<dbReference type="Pfam" id="PF02569">
    <property type="entry name" value="Pantoate_ligase"/>
    <property type="match status" value="1"/>
</dbReference>
<dbReference type="SUPFAM" id="SSF52374">
    <property type="entry name" value="Nucleotidylyl transferase"/>
    <property type="match status" value="1"/>
</dbReference>
<dbReference type="SUPFAM" id="SSF52540">
    <property type="entry name" value="P-loop containing nucleoside triphosphate hydrolases"/>
    <property type="match status" value="1"/>
</dbReference>
<comment type="function">
    <text evidence="1">Catalyzes the condensation of pantoate with beta-alanine in an ATP-dependent reaction via a pantoyl-adenylate intermediate.</text>
</comment>
<comment type="function">
    <text evidence="1">Catalyzes the transfer of a phosphate group from ATP to either CMP or dCMP to form CDP or dCDP and ADP, respectively.</text>
</comment>
<comment type="catalytic activity">
    <reaction evidence="1">
        <text>(R)-pantoate + beta-alanine + ATP = (R)-pantothenate + AMP + diphosphate + H(+)</text>
        <dbReference type="Rhea" id="RHEA:10912"/>
        <dbReference type="ChEBI" id="CHEBI:15378"/>
        <dbReference type="ChEBI" id="CHEBI:15980"/>
        <dbReference type="ChEBI" id="CHEBI:29032"/>
        <dbReference type="ChEBI" id="CHEBI:30616"/>
        <dbReference type="ChEBI" id="CHEBI:33019"/>
        <dbReference type="ChEBI" id="CHEBI:57966"/>
        <dbReference type="ChEBI" id="CHEBI:456215"/>
        <dbReference type="EC" id="6.3.2.1"/>
    </reaction>
</comment>
<comment type="catalytic activity">
    <reaction evidence="1">
        <text>CMP + ATP = CDP + ADP</text>
        <dbReference type="Rhea" id="RHEA:11600"/>
        <dbReference type="ChEBI" id="CHEBI:30616"/>
        <dbReference type="ChEBI" id="CHEBI:58069"/>
        <dbReference type="ChEBI" id="CHEBI:60377"/>
        <dbReference type="ChEBI" id="CHEBI:456216"/>
        <dbReference type="EC" id="2.7.4.25"/>
    </reaction>
</comment>
<comment type="catalytic activity">
    <reaction evidence="1">
        <text>dCMP + ATP = dCDP + ADP</text>
        <dbReference type="Rhea" id="RHEA:25094"/>
        <dbReference type="ChEBI" id="CHEBI:30616"/>
        <dbReference type="ChEBI" id="CHEBI:57566"/>
        <dbReference type="ChEBI" id="CHEBI:58593"/>
        <dbReference type="ChEBI" id="CHEBI:456216"/>
        <dbReference type="EC" id="2.7.4.25"/>
    </reaction>
</comment>
<comment type="pathway">
    <text evidence="1">Cofactor biosynthesis; (R)-pantothenate biosynthesis; (R)-pantothenate from (R)-pantoate and beta-alanine: step 1/1.</text>
</comment>
<comment type="subcellular location">
    <subcellularLocation>
        <location evidence="1">Cytoplasm</location>
    </subcellularLocation>
</comment>
<comment type="similarity">
    <text evidence="1">In the N-terminal section; belongs to the pantothenate synthetase family.</text>
</comment>
<comment type="similarity">
    <text evidence="1">In the C-terminal section; belongs to the cytidylate kinase family. Type 1 subfamily.</text>
</comment>